<name>ARGDC_PYRAR</name>
<comment type="function">
    <text evidence="1">Specifically catalyzes the decarboxylation of L-arginine to agmatine. Has no S-adenosylmethionine decarboxylase (AdoMetDC) activity.</text>
</comment>
<comment type="catalytic activity">
    <reaction evidence="1">
        <text>L-arginine + H(+) = agmatine + CO2</text>
        <dbReference type="Rhea" id="RHEA:17641"/>
        <dbReference type="ChEBI" id="CHEBI:15378"/>
        <dbReference type="ChEBI" id="CHEBI:16526"/>
        <dbReference type="ChEBI" id="CHEBI:32682"/>
        <dbReference type="ChEBI" id="CHEBI:58145"/>
        <dbReference type="EC" id="4.1.1.19"/>
    </reaction>
</comment>
<comment type="cofactor">
    <cofactor evidence="1">
        <name>pyruvate</name>
        <dbReference type="ChEBI" id="CHEBI:15361"/>
    </cofactor>
    <text evidence="1">Binds 1 pyruvoyl group covalently per subunit.</text>
</comment>
<comment type="pathway">
    <text evidence="1">Amine and polyamine biosynthesis; agmatine biosynthesis; agmatine from L-arginine: step 1/1.</text>
</comment>
<comment type="subunit">
    <text evidence="1">Heterooctamer of four alpha and four beta chains arranged as a tetramer of alpha/beta heterodimers.</text>
</comment>
<comment type="PTM">
    <text evidence="1">Is synthesized initially as an inactive proenzyme. Formation of the active enzyme involves a self-maturation process in which the active site pyruvoyl group is generated from an internal serine residue via an autocatalytic post-translational modification. Two non-identical subunits are generated from the proenzyme in this reaction, and the pyruvate is formed at the N-terminus of the alpha chain, which is derived from the carboxyl end of the proenzyme. The post-translation cleavage follows an unusual pathway, termed non-hydrolytic serinolysis, in which the side chain hydroxyl group of the serine supplies its oxygen atom to form the C-terminus of the beta chain, while the remainder of the serine residue undergoes an oxidative deamination to produce ammonia and the pyruvoyl group blocking the N-terminus of the alpha chain.</text>
</comment>
<comment type="similarity">
    <text evidence="1">Belongs to the prokaryotic AdoMetDC family. Type 1 subfamily.</text>
</comment>
<accession>A4WIW6</accession>
<proteinExistence type="inferred from homology"/>
<organism>
    <name type="scientific">Pyrobaculum arsenaticum (strain DSM 13514 / JCM 11321 / PZ6)</name>
    <dbReference type="NCBI Taxonomy" id="340102"/>
    <lineage>
        <taxon>Archaea</taxon>
        <taxon>Thermoproteota</taxon>
        <taxon>Thermoprotei</taxon>
        <taxon>Thermoproteales</taxon>
        <taxon>Thermoproteaceae</taxon>
        <taxon>Pyrobaculum</taxon>
    </lineage>
</organism>
<reference key="1">
    <citation type="submission" date="2007-04" db="EMBL/GenBank/DDBJ databases">
        <title>Complete sequence of Pyrobaculum arsenaticum DSM 13514.</title>
        <authorList>
            <consortium name="US DOE Joint Genome Institute"/>
            <person name="Copeland A."/>
            <person name="Lucas S."/>
            <person name="Lapidus A."/>
            <person name="Barry K."/>
            <person name="Glavina del Rio T."/>
            <person name="Dalin E."/>
            <person name="Tice H."/>
            <person name="Pitluck S."/>
            <person name="Chain P."/>
            <person name="Malfatti S."/>
            <person name="Shin M."/>
            <person name="Vergez L."/>
            <person name="Schmutz J."/>
            <person name="Larimer F."/>
            <person name="Land M."/>
            <person name="Hauser L."/>
            <person name="Kyrpides N."/>
            <person name="Mikhailova N."/>
            <person name="Cozen A.E."/>
            <person name="Fitz-Gibbon S.T."/>
            <person name="House C.H."/>
            <person name="Saltikov C."/>
            <person name="Lowe T.M."/>
            <person name="Richardson P."/>
        </authorList>
    </citation>
    <scope>NUCLEOTIDE SEQUENCE [LARGE SCALE GENOMIC DNA]</scope>
    <source>
        <strain>ATCC 700994 / DSM 13514 / JCM 11321 / PZ6</strain>
    </source>
</reference>
<feature type="chain" id="PRO_0000364119" description="Arginine decarboxylase beta chain" evidence="1">
    <location>
        <begin position="1"/>
        <end position="80"/>
    </location>
</feature>
<feature type="chain" id="PRO_0000364120" description="Arginine decarboxylase alpha chain" evidence="1">
    <location>
        <begin position="81"/>
        <end position="133"/>
    </location>
</feature>
<feature type="active site" description="Schiff-base intermediate with substrate; via pyruvic acid" evidence="1">
    <location>
        <position position="81"/>
    </location>
</feature>
<feature type="active site" description="Proton acceptor; for processing activity" evidence="1">
    <location>
        <position position="86"/>
    </location>
</feature>
<feature type="active site" description="Proton donor; for catalytic activity" evidence="1">
    <location>
        <position position="101"/>
    </location>
</feature>
<feature type="site" description="Cleavage (non-hydrolytic); by autolysis" evidence="1">
    <location>
        <begin position="80"/>
        <end position="81"/>
    </location>
</feature>
<feature type="modified residue" description="Pyruvic acid (Ser); by autocatalysis" evidence="1">
    <location>
        <position position="81"/>
    </location>
</feature>
<gene>
    <name type="ordered locus">Pars_0747</name>
</gene>
<protein>
    <recommendedName>
        <fullName evidence="1">Arginine decarboxylase proenzyme</fullName>
        <shortName evidence="1">ADC</shortName>
        <shortName evidence="1">ArgDC</shortName>
        <ecNumber evidence="1">4.1.1.19</ecNumber>
    </recommendedName>
    <alternativeName>
        <fullName evidence="1">Pyruvoyl-dependent arginine decarboxylase</fullName>
    </alternativeName>
    <component>
        <recommendedName>
            <fullName evidence="1">Arginine decarboxylase beta chain</fullName>
        </recommendedName>
    </component>
    <component>
        <recommendedName>
            <fullName evidence="1">Arginine decarboxylase alpha chain</fullName>
        </recommendedName>
    </component>
</protein>
<keyword id="KW-0068">Autocatalytic cleavage</keyword>
<keyword id="KW-0210">Decarboxylase</keyword>
<keyword id="KW-0456">Lyase</keyword>
<keyword id="KW-0620">Polyamine biosynthesis</keyword>
<keyword id="KW-0670">Pyruvate</keyword>
<keyword id="KW-0704">Schiff base</keyword>
<keyword id="KW-0865">Zymogen</keyword>
<evidence type="ECO:0000255" key="1">
    <source>
        <dbReference type="HAMAP-Rule" id="MF_01298"/>
    </source>
</evidence>
<sequence>MARGGMEARAQTQVKTPVVGKHVYGELYGVDEKLLQDEGRLRQIVIEAAHIANMHLVEVNSWRFKGGDKEGVSVIALVLESHIAIHTWPTYKFATVDVYTCGEHSDPMSAFRYIVSQLSPKRFTVNYSDRSYK</sequence>
<dbReference type="EC" id="4.1.1.19" evidence="1"/>
<dbReference type="EMBL" id="CP000660">
    <property type="protein sequence ID" value="ABP50333.1"/>
    <property type="molecule type" value="Genomic_DNA"/>
</dbReference>
<dbReference type="SMR" id="A4WIW6"/>
<dbReference type="STRING" id="340102.Pars_0747"/>
<dbReference type="KEGG" id="pas:Pars_0747"/>
<dbReference type="HOGENOM" id="CLU_125470_2_1_2"/>
<dbReference type="OrthoDB" id="114016at2157"/>
<dbReference type="PhylomeDB" id="A4WIW6"/>
<dbReference type="UniPathway" id="UPA00186">
    <property type="reaction ID" value="UER00284"/>
</dbReference>
<dbReference type="Proteomes" id="UP000001567">
    <property type="component" value="Chromosome"/>
</dbReference>
<dbReference type="GO" id="GO:0005829">
    <property type="term" value="C:cytosol"/>
    <property type="evidence" value="ECO:0007669"/>
    <property type="project" value="TreeGrafter"/>
</dbReference>
<dbReference type="GO" id="GO:0008792">
    <property type="term" value="F:arginine decarboxylase activity"/>
    <property type="evidence" value="ECO:0007669"/>
    <property type="project" value="UniProtKB-UniRule"/>
</dbReference>
<dbReference type="GO" id="GO:0006527">
    <property type="term" value="P:arginine catabolic process"/>
    <property type="evidence" value="ECO:0007669"/>
    <property type="project" value="UniProtKB-UniRule"/>
</dbReference>
<dbReference type="GO" id="GO:0006596">
    <property type="term" value="P:polyamine biosynthetic process"/>
    <property type="evidence" value="ECO:0007669"/>
    <property type="project" value="UniProtKB-UniRule"/>
</dbReference>
<dbReference type="FunFam" id="3.60.90.10:FF:000005">
    <property type="entry name" value="Arginine decarboxylase proenzyme"/>
    <property type="match status" value="1"/>
</dbReference>
<dbReference type="Gene3D" id="3.60.90.10">
    <property type="entry name" value="S-adenosylmethionine decarboxylase"/>
    <property type="match status" value="1"/>
</dbReference>
<dbReference type="HAMAP" id="MF_00464">
    <property type="entry name" value="AdoMetDC_1"/>
    <property type="match status" value="1"/>
</dbReference>
<dbReference type="HAMAP" id="MF_01298">
    <property type="entry name" value="ArgDC"/>
    <property type="match status" value="1"/>
</dbReference>
<dbReference type="InterPro" id="IPR003826">
    <property type="entry name" value="AdoMetDC_fam_prok"/>
</dbReference>
<dbReference type="InterPro" id="IPR027549">
    <property type="entry name" value="ArgDC"/>
</dbReference>
<dbReference type="InterPro" id="IPR016067">
    <property type="entry name" value="S-AdoMet_deCO2ase_core"/>
</dbReference>
<dbReference type="InterPro" id="IPR017716">
    <property type="entry name" value="S-AdoMet_deCOase_pro-enz"/>
</dbReference>
<dbReference type="NCBIfam" id="TIGR03330">
    <property type="entry name" value="SAM_DCase_Bsu"/>
    <property type="match status" value="1"/>
</dbReference>
<dbReference type="PANTHER" id="PTHR33866">
    <property type="entry name" value="S-ADENOSYLMETHIONINE DECARBOXYLASE PROENZYME"/>
    <property type="match status" value="1"/>
</dbReference>
<dbReference type="PANTHER" id="PTHR33866:SF2">
    <property type="entry name" value="S-ADENOSYLMETHIONINE DECARBOXYLASE PROENZYME"/>
    <property type="match status" value="1"/>
</dbReference>
<dbReference type="Pfam" id="PF02675">
    <property type="entry name" value="AdoMet_dc"/>
    <property type="match status" value="1"/>
</dbReference>
<dbReference type="SUPFAM" id="SSF56276">
    <property type="entry name" value="S-adenosylmethionine decarboxylase"/>
    <property type="match status" value="1"/>
</dbReference>